<proteinExistence type="inferred from homology"/>
<organism>
    <name type="scientific">Escherichia coli (strain K12 / MC4100 / BW2952)</name>
    <dbReference type="NCBI Taxonomy" id="595496"/>
    <lineage>
        <taxon>Bacteria</taxon>
        <taxon>Pseudomonadati</taxon>
        <taxon>Pseudomonadota</taxon>
        <taxon>Gammaproteobacteria</taxon>
        <taxon>Enterobacterales</taxon>
        <taxon>Enterobacteriaceae</taxon>
        <taxon>Escherichia</taxon>
    </lineage>
</organism>
<keyword id="KW-0963">Cytoplasm</keyword>
<keyword id="KW-0456">Lyase</keyword>
<keyword id="KW-0704">Schiff base</keyword>
<evidence type="ECO:0000255" key="1">
    <source>
        <dbReference type="HAMAP-Rule" id="MF_00592"/>
    </source>
</evidence>
<accession>C4ZT63</accession>
<dbReference type="EC" id="4.1.2.4" evidence="1"/>
<dbReference type="EMBL" id="CP001396">
    <property type="protein sequence ID" value="ACR61767.1"/>
    <property type="molecule type" value="Genomic_DNA"/>
</dbReference>
<dbReference type="RefSeq" id="WP_001298497.1">
    <property type="nucleotide sequence ID" value="NC_012759.1"/>
</dbReference>
<dbReference type="SMR" id="C4ZT63"/>
<dbReference type="GeneID" id="86862495"/>
<dbReference type="KEGG" id="ebw:BWG_4073"/>
<dbReference type="HOGENOM" id="CLU_053595_3_1_6"/>
<dbReference type="UniPathway" id="UPA00002">
    <property type="reaction ID" value="UER00468"/>
</dbReference>
<dbReference type="GO" id="GO:0005737">
    <property type="term" value="C:cytoplasm"/>
    <property type="evidence" value="ECO:0007669"/>
    <property type="project" value="UniProtKB-SubCell"/>
</dbReference>
<dbReference type="GO" id="GO:0004139">
    <property type="term" value="F:deoxyribose-phosphate aldolase activity"/>
    <property type="evidence" value="ECO:0007669"/>
    <property type="project" value="UniProtKB-UniRule"/>
</dbReference>
<dbReference type="GO" id="GO:0006018">
    <property type="term" value="P:2-deoxyribose 1-phosphate catabolic process"/>
    <property type="evidence" value="ECO:0007669"/>
    <property type="project" value="UniProtKB-UniRule"/>
</dbReference>
<dbReference type="GO" id="GO:0016052">
    <property type="term" value="P:carbohydrate catabolic process"/>
    <property type="evidence" value="ECO:0007669"/>
    <property type="project" value="TreeGrafter"/>
</dbReference>
<dbReference type="GO" id="GO:0009264">
    <property type="term" value="P:deoxyribonucleotide catabolic process"/>
    <property type="evidence" value="ECO:0007669"/>
    <property type="project" value="InterPro"/>
</dbReference>
<dbReference type="CDD" id="cd00959">
    <property type="entry name" value="DeoC"/>
    <property type="match status" value="1"/>
</dbReference>
<dbReference type="FunFam" id="3.20.20.70:FF:000034">
    <property type="entry name" value="Deoxyribose-phosphate aldolase"/>
    <property type="match status" value="1"/>
</dbReference>
<dbReference type="Gene3D" id="3.20.20.70">
    <property type="entry name" value="Aldolase class I"/>
    <property type="match status" value="1"/>
</dbReference>
<dbReference type="HAMAP" id="MF_00592">
    <property type="entry name" value="DeoC_type2"/>
    <property type="match status" value="1"/>
</dbReference>
<dbReference type="InterPro" id="IPR013785">
    <property type="entry name" value="Aldolase_TIM"/>
</dbReference>
<dbReference type="InterPro" id="IPR011343">
    <property type="entry name" value="DeoC"/>
</dbReference>
<dbReference type="InterPro" id="IPR002915">
    <property type="entry name" value="DeoC/FbaB/LacD_aldolase"/>
</dbReference>
<dbReference type="InterPro" id="IPR023649">
    <property type="entry name" value="DeoC_typeII"/>
</dbReference>
<dbReference type="NCBIfam" id="TIGR00126">
    <property type="entry name" value="deoC"/>
    <property type="match status" value="1"/>
</dbReference>
<dbReference type="PANTHER" id="PTHR10889">
    <property type="entry name" value="DEOXYRIBOSE-PHOSPHATE ALDOLASE"/>
    <property type="match status" value="1"/>
</dbReference>
<dbReference type="PANTHER" id="PTHR10889:SF3">
    <property type="entry name" value="DEOXYRIBOSE-PHOSPHATE ALDOLASE"/>
    <property type="match status" value="1"/>
</dbReference>
<dbReference type="Pfam" id="PF01791">
    <property type="entry name" value="DeoC"/>
    <property type="match status" value="1"/>
</dbReference>
<dbReference type="PIRSF" id="PIRSF001357">
    <property type="entry name" value="DeoC"/>
    <property type="match status" value="1"/>
</dbReference>
<dbReference type="SMART" id="SM01133">
    <property type="entry name" value="DeoC"/>
    <property type="match status" value="1"/>
</dbReference>
<dbReference type="SUPFAM" id="SSF51569">
    <property type="entry name" value="Aldolase"/>
    <property type="match status" value="1"/>
</dbReference>
<name>DEOC_ECOBW</name>
<gene>
    <name evidence="1" type="primary">deoC</name>
    <name type="ordered locus">BWG_4073</name>
</gene>
<feature type="chain" id="PRO_1000212173" description="Deoxyribose-phosphate aldolase">
    <location>
        <begin position="1"/>
        <end position="259"/>
    </location>
</feature>
<feature type="active site" description="Proton donor/acceptor" evidence="1">
    <location>
        <position position="102"/>
    </location>
</feature>
<feature type="active site" description="Schiff-base intermediate with acetaldehyde" evidence="1">
    <location>
        <position position="167"/>
    </location>
</feature>
<feature type="active site" description="Proton donor/acceptor" evidence="1">
    <location>
        <position position="201"/>
    </location>
</feature>
<sequence>MTDLKASSLRALKLMDLTTLNDDDTDEKVIALCHQAKTPVGNTAAICIYPRFIPIARKTLKEQGTPEIRIATVTNFPHGNDDIDIALAETRAAIAYGADEVDVVFPYRALMAGNEQVGFDLVKACKEACAAANVLLKVIIETGELKDEALIRKASEISIKAGADFIKTSTGKVAVNATPESARIMMEVIRDMGVEKTVGFKPAGGVRTAEDAQKYLAIADELFGADWADARHYRFGASSLLASLLKALGHGDGKSASSY</sequence>
<comment type="function">
    <text evidence="1">Catalyzes a reversible aldol reaction between acetaldehyde and D-glyceraldehyde 3-phosphate to generate 2-deoxy-D-ribose 5-phosphate.</text>
</comment>
<comment type="catalytic activity">
    <reaction evidence="1">
        <text>2-deoxy-D-ribose 5-phosphate = D-glyceraldehyde 3-phosphate + acetaldehyde</text>
        <dbReference type="Rhea" id="RHEA:12821"/>
        <dbReference type="ChEBI" id="CHEBI:15343"/>
        <dbReference type="ChEBI" id="CHEBI:59776"/>
        <dbReference type="ChEBI" id="CHEBI:62877"/>
        <dbReference type="EC" id="4.1.2.4"/>
    </reaction>
</comment>
<comment type="pathway">
    <text evidence="1">Carbohydrate degradation; 2-deoxy-D-ribose 1-phosphate degradation; D-glyceraldehyde 3-phosphate and acetaldehyde from 2-deoxy-alpha-D-ribose 1-phosphate: step 2/2.</text>
</comment>
<comment type="subcellular location">
    <subcellularLocation>
        <location evidence="1">Cytoplasm</location>
    </subcellularLocation>
</comment>
<comment type="similarity">
    <text evidence="1">Belongs to the DeoC/FbaB aldolase family. DeoC type 2 subfamily.</text>
</comment>
<reference key="1">
    <citation type="journal article" date="2009" name="J. Bacteriol.">
        <title>Genomic sequencing reveals regulatory mutations and recombinational events in the widely used MC4100 lineage of Escherichia coli K-12.</title>
        <authorList>
            <person name="Ferenci T."/>
            <person name="Zhou Z."/>
            <person name="Betteridge T."/>
            <person name="Ren Y."/>
            <person name="Liu Y."/>
            <person name="Feng L."/>
            <person name="Reeves P.R."/>
            <person name="Wang L."/>
        </authorList>
    </citation>
    <scope>NUCLEOTIDE SEQUENCE [LARGE SCALE GENOMIC DNA]</scope>
    <source>
        <strain>K12 / MC4100 / BW2952</strain>
    </source>
</reference>
<protein>
    <recommendedName>
        <fullName evidence="1">Deoxyribose-phosphate aldolase</fullName>
        <shortName evidence="1">DERA</shortName>
        <ecNumber evidence="1">4.1.2.4</ecNumber>
    </recommendedName>
    <alternativeName>
        <fullName evidence="1">2-deoxy-D-ribose 5-phosphate aldolase</fullName>
    </alternativeName>
    <alternativeName>
        <fullName evidence="1">Phosphodeoxyriboaldolase</fullName>
        <shortName evidence="1">Deoxyriboaldolase</shortName>
    </alternativeName>
</protein>